<feature type="chain" id="PRO_0000382955" description="Probable 4-amino-4-deoxy-L-arabinose-phosphoundecaprenol flippase subunit ArnE">
    <location>
        <begin position="1"/>
        <end position="108"/>
    </location>
</feature>
<feature type="transmembrane region" description="Helical" evidence="1">
    <location>
        <begin position="32"/>
        <end position="52"/>
    </location>
</feature>
<feature type="transmembrane region" description="Helical" evidence="1">
    <location>
        <begin position="58"/>
        <end position="78"/>
    </location>
</feature>
<feature type="transmembrane region" description="Helical" evidence="1">
    <location>
        <begin position="85"/>
        <end position="105"/>
    </location>
</feature>
<feature type="domain" description="EamA" evidence="1">
    <location>
        <begin position="34"/>
        <end position="106"/>
    </location>
</feature>
<sequence length="108" mass="11739">MNILLIILASLFSCAGQLCQKQATTVSGGRRPLLLWLGGSVLLLGMAMLVWLRVLQTVPVGVAYPMLSLNFIFVTLAARWLWRETLSLRHALGVILIVAGVAIMGSYT</sequence>
<evidence type="ECO:0000255" key="1">
    <source>
        <dbReference type="HAMAP-Rule" id="MF_01869"/>
    </source>
</evidence>
<proteinExistence type="inferred from homology"/>
<organism>
    <name type="scientific">Erwinia tasmaniensis (strain DSM 17950 / CFBP 7177 / CIP 109463 / NCPPB 4357 / Et1/99)</name>
    <dbReference type="NCBI Taxonomy" id="465817"/>
    <lineage>
        <taxon>Bacteria</taxon>
        <taxon>Pseudomonadati</taxon>
        <taxon>Pseudomonadota</taxon>
        <taxon>Gammaproteobacteria</taxon>
        <taxon>Enterobacterales</taxon>
        <taxon>Erwiniaceae</taxon>
        <taxon>Erwinia</taxon>
    </lineage>
</organism>
<accession>B2VBI6</accession>
<reference key="1">
    <citation type="journal article" date="2008" name="Environ. Microbiol.">
        <title>The genome of Erwinia tasmaniensis strain Et1/99, a non-pathogenic bacterium in the genus Erwinia.</title>
        <authorList>
            <person name="Kube M."/>
            <person name="Migdoll A.M."/>
            <person name="Mueller I."/>
            <person name="Kuhl H."/>
            <person name="Beck A."/>
            <person name="Reinhardt R."/>
            <person name="Geider K."/>
        </authorList>
    </citation>
    <scope>NUCLEOTIDE SEQUENCE [LARGE SCALE GENOMIC DNA]</scope>
    <source>
        <strain>DSM 17950 / CFBP 7177 / CIP 109463 / NCPPB 4357 / Et1/99</strain>
    </source>
</reference>
<dbReference type="EMBL" id="CU468135">
    <property type="protein sequence ID" value="CAO97424.1"/>
    <property type="molecule type" value="Genomic_DNA"/>
</dbReference>
<dbReference type="RefSeq" id="WP_012442092.1">
    <property type="nucleotide sequence ID" value="NC_010694.1"/>
</dbReference>
<dbReference type="SMR" id="B2VBI6"/>
<dbReference type="STRING" id="465817.ETA_23780"/>
<dbReference type="KEGG" id="eta:ETA_23780"/>
<dbReference type="eggNOG" id="COG2076">
    <property type="taxonomic scope" value="Bacteria"/>
</dbReference>
<dbReference type="HOGENOM" id="CLU_131462_5_1_6"/>
<dbReference type="OrthoDB" id="6058674at2"/>
<dbReference type="UniPathway" id="UPA00030"/>
<dbReference type="Proteomes" id="UP000001726">
    <property type="component" value="Chromosome"/>
</dbReference>
<dbReference type="GO" id="GO:0005886">
    <property type="term" value="C:plasma membrane"/>
    <property type="evidence" value="ECO:0007669"/>
    <property type="project" value="UniProtKB-SubCell"/>
</dbReference>
<dbReference type="GO" id="GO:1901505">
    <property type="term" value="F:carbohydrate derivative transmembrane transporter activity"/>
    <property type="evidence" value="ECO:0007669"/>
    <property type="project" value="InterPro"/>
</dbReference>
<dbReference type="GO" id="GO:0009245">
    <property type="term" value="P:lipid A biosynthetic process"/>
    <property type="evidence" value="ECO:0007669"/>
    <property type="project" value="UniProtKB-UniRule"/>
</dbReference>
<dbReference type="GO" id="GO:0009103">
    <property type="term" value="P:lipopolysaccharide biosynthetic process"/>
    <property type="evidence" value="ECO:0007669"/>
    <property type="project" value="UniProtKB-UniRule"/>
</dbReference>
<dbReference type="FunFam" id="1.10.3730.20:FF:000002">
    <property type="entry name" value="Probable 4-amino-4-deoxy-L-arabinose-phosphoundecaprenol flippase subunit ArnE"/>
    <property type="match status" value="1"/>
</dbReference>
<dbReference type="Gene3D" id="1.10.3730.20">
    <property type="match status" value="1"/>
</dbReference>
<dbReference type="HAMAP" id="MF_01869">
    <property type="entry name" value="Flippase_ArnE"/>
    <property type="match status" value="1"/>
</dbReference>
<dbReference type="InterPro" id="IPR000620">
    <property type="entry name" value="EamA_dom"/>
</dbReference>
<dbReference type="InterPro" id="IPR022883">
    <property type="entry name" value="Flippase_ArnE"/>
</dbReference>
<dbReference type="InterPro" id="IPR000390">
    <property type="entry name" value="Small_drug/metabolite_transptr"/>
</dbReference>
<dbReference type="NCBIfam" id="NF011625">
    <property type="entry name" value="PRK15051.1"/>
    <property type="match status" value="1"/>
</dbReference>
<dbReference type="PANTHER" id="PTHR30561:SF23">
    <property type="entry name" value="4-AMINO-4-DEOXY-L-ARABINOSE-PHOSPHOUNDECAPRENOL FLIPPASE SUBUNIT ARNE-RELATED"/>
    <property type="match status" value="1"/>
</dbReference>
<dbReference type="PANTHER" id="PTHR30561">
    <property type="entry name" value="SMR FAMILY PROTON-DEPENDENT DRUG EFFLUX TRANSPORTER SUGE"/>
    <property type="match status" value="1"/>
</dbReference>
<dbReference type="Pfam" id="PF00892">
    <property type="entry name" value="EamA"/>
    <property type="match status" value="1"/>
</dbReference>
<dbReference type="SUPFAM" id="SSF103481">
    <property type="entry name" value="Multidrug resistance efflux transporter EmrE"/>
    <property type="match status" value="1"/>
</dbReference>
<keyword id="KW-0997">Cell inner membrane</keyword>
<keyword id="KW-1003">Cell membrane</keyword>
<keyword id="KW-0441">Lipid A biosynthesis</keyword>
<keyword id="KW-0444">Lipid biosynthesis</keyword>
<keyword id="KW-0443">Lipid metabolism</keyword>
<keyword id="KW-0448">Lipopolysaccharide biosynthesis</keyword>
<keyword id="KW-0472">Membrane</keyword>
<keyword id="KW-1185">Reference proteome</keyword>
<keyword id="KW-0812">Transmembrane</keyword>
<keyword id="KW-1133">Transmembrane helix</keyword>
<keyword id="KW-0813">Transport</keyword>
<gene>
    <name evidence="1" type="primary">arnE</name>
    <name type="ordered locus">ETA_23780</name>
</gene>
<name>ARNE_ERWT9</name>
<comment type="function">
    <text evidence="1">Translocates 4-amino-4-deoxy-L-arabinose-phosphoundecaprenol (alpha-L-Ara4N-phosphoundecaprenol) from the cytoplasmic to the periplasmic side of the inner membrane.</text>
</comment>
<comment type="pathway">
    <text evidence="1">Bacterial outer membrane biogenesis; lipopolysaccharide biosynthesis.</text>
</comment>
<comment type="subunit">
    <text evidence="1">Heterodimer of ArnE and ArnF.</text>
</comment>
<comment type="subcellular location">
    <subcellularLocation>
        <location evidence="1">Cell inner membrane</location>
        <topology evidence="1">Multi-pass membrane protein</topology>
    </subcellularLocation>
</comment>
<comment type="similarity">
    <text evidence="1">Belongs to the ArnE family.</text>
</comment>
<protein>
    <recommendedName>
        <fullName evidence="1">Probable 4-amino-4-deoxy-L-arabinose-phosphoundecaprenol flippase subunit ArnE</fullName>
        <shortName evidence="1">L-Ara4N-phosphoundecaprenol flippase subunit ArnE</shortName>
    </recommendedName>
    <alternativeName>
        <fullName evidence="1">Undecaprenyl phosphate-aminoarabinose flippase subunit ArnE</fullName>
    </alternativeName>
</protein>